<accession>Q9SV60</accession>
<accession>Q4PSI7</accession>
<comment type="function">
    <text evidence="1">May catalyze xyloglucan endohydrolysis (XEH) and/or endotransglycosylation (XET). Cleaves and religates xyloglucan polymers, an essential constituent of the primary cell wall, and thereby participates in cell wall construction of growing tissues (By similarity).</text>
</comment>
<comment type="catalytic activity">
    <reaction>
        <text>breaks a beta-(1-&gt;4) bond in the backbone of a xyloglucan and transfers the xyloglucanyl segment on to O-4 of the non-reducing terminal glucose residue of an acceptor, which can be a xyloglucan or an oligosaccharide of xyloglucan.</text>
        <dbReference type="EC" id="2.4.1.207"/>
    </reaction>
</comment>
<comment type="subcellular location">
    <subcellularLocation>
        <location evidence="5">Secreted</location>
        <location evidence="5">Cell wall</location>
    </subcellularLocation>
    <subcellularLocation>
        <location evidence="5">Secreted</location>
        <location evidence="5">Extracellular space</location>
        <location evidence="5">Apoplast</location>
    </subcellularLocation>
</comment>
<comment type="PTM">
    <text evidence="1">Contains at least one intrachain disulfide bond essential for its enzymatic activity.</text>
</comment>
<comment type="similarity">
    <text evidence="5">Belongs to the glycosyl hydrolase 16 family. XTH group 1 subfamily.</text>
</comment>
<reference key="1">
    <citation type="journal article" date="1999" name="Nature">
        <title>Sequence and analysis of chromosome 4 of the plant Arabidopsis thaliana.</title>
        <authorList>
            <person name="Mayer K.F.X."/>
            <person name="Schueller C."/>
            <person name="Wambutt R."/>
            <person name="Murphy G."/>
            <person name="Volckaert G."/>
            <person name="Pohl T."/>
            <person name="Duesterhoeft A."/>
            <person name="Stiekema W."/>
            <person name="Entian K.-D."/>
            <person name="Terryn N."/>
            <person name="Harris B."/>
            <person name="Ansorge W."/>
            <person name="Brandt P."/>
            <person name="Grivell L.A."/>
            <person name="Rieger M."/>
            <person name="Weichselgartner M."/>
            <person name="de Simone V."/>
            <person name="Obermaier B."/>
            <person name="Mache R."/>
            <person name="Mueller M."/>
            <person name="Kreis M."/>
            <person name="Delseny M."/>
            <person name="Puigdomenech P."/>
            <person name="Watson M."/>
            <person name="Schmidtheini T."/>
            <person name="Reichert B."/>
            <person name="Portetelle D."/>
            <person name="Perez-Alonso M."/>
            <person name="Boutry M."/>
            <person name="Bancroft I."/>
            <person name="Vos P."/>
            <person name="Hoheisel J."/>
            <person name="Zimmermann W."/>
            <person name="Wedler H."/>
            <person name="Ridley P."/>
            <person name="Langham S.-A."/>
            <person name="McCullagh B."/>
            <person name="Bilham L."/>
            <person name="Robben J."/>
            <person name="van der Schueren J."/>
            <person name="Grymonprez B."/>
            <person name="Chuang Y.-J."/>
            <person name="Vandenbussche F."/>
            <person name="Braeken M."/>
            <person name="Weltjens I."/>
            <person name="Voet M."/>
            <person name="Bastiaens I."/>
            <person name="Aert R."/>
            <person name="Defoor E."/>
            <person name="Weitzenegger T."/>
            <person name="Bothe G."/>
            <person name="Ramsperger U."/>
            <person name="Hilbert H."/>
            <person name="Braun M."/>
            <person name="Holzer E."/>
            <person name="Brandt A."/>
            <person name="Peters S."/>
            <person name="van Staveren M."/>
            <person name="Dirkse W."/>
            <person name="Mooijman P."/>
            <person name="Klein Lankhorst R."/>
            <person name="Rose M."/>
            <person name="Hauf J."/>
            <person name="Koetter P."/>
            <person name="Berneiser S."/>
            <person name="Hempel S."/>
            <person name="Feldpausch M."/>
            <person name="Lamberth S."/>
            <person name="Van den Daele H."/>
            <person name="De Keyser A."/>
            <person name="Buysshaert C."/>
            <person name="Gielen J."/>
            <person name="Villarroel R."/>
            <person name="De Clercq R."/>
            <person name="van Montagu M."/>
            <person name="Rogers J."/>
            <person name="Cronin A."/>
            <person name="Quail M.A."/>
            <person name="Bray-Allen S."/>
            <person name="Clark L."/>
            <person name="Doggett J."/>
            <person name="Hall S."/>
            <person name="Kay M."/>
            <person name="Lennard N."/>
            <person name="McLay K."/>
            <person name="Mayes R."/>
            <person name="Pettett A."/>
            <person name="Rajandream M.A."/>
            <person name="Lyne M."/>
            <person name="Benes V."/>
            <person name="Rechmann S."/>
            <person name="Borkova D."/>
            <person name="Bloecker H."/>
            <person name="Scharfe M."/>
            <person name="Grimm M."/>
            <person name="Loehnert T.-H."/>
            <person name="Dose S."/>
            <person name="de Haan M."/>
            <person name="Maarse A.C."/>
            <person name="Schaefer M."/>
            <person name="Mueller-Auer S."/>
            <person name="Gabel C."/>
            <person name="Fuchs M."/>
            <person name="Fartmann B."/>
            <person name="Granderath K."/>
            <person name="Dauner D."/>
            <person name="Herzl A."/>
            <person name="Neumann S."/>
            <person name="Argiriou A."/>
            <person name="Vitale D."/>
            <person name="Liguori R."/>
            <person name="Piravandi E."/>
            <person name="Massenet O."/>
            <person name="Quigley F."/>
            <person name="Clabauld G."/>
            <person name="Muendlein A."/>
            <person name="Felber R."/>
            <person name="Schnabl S."/>
            <person name="Hiller R."/>
            <person name="Schmidt W."/>
            <person name="Lecharny A."/>
            <person name="Aubourg S."/>
            <person name="Chefdor F."/>
            <person name="Cooke R."/>
            <person name="Berger C."/>
            <person name="Monfort A."/>
            <person name="Casacuberta E."/>
            <person name="Gibbons T."/>
            <person name="Weber N."/>
            <person name="Vandenbol M."/>
            <person name="Bargues M."/>
            <person name="Terol J."/>
            <person name="Torres A."/>
            <person name="Perez-Perez A."/>
            <person name="Purnelle B."/>
            <person name="Bent E."/>
            <person name="Johnson S."/>
            <person name="Tacon D."/>
            <person name="Jesse T."/>
            <person name="Heijnen L."/>
            <person name="Schwarz S."/>
            <person name="Scholler P."/>
            <person name="Heber S."/>
            <person name="Francs P."/>
            <person name="Bielke C."/>
            <person name="Frishman D."/>
            <person name="Haase D."/>
            <person name="Lemcke K."/>
            <person name="Mewes H.-W."/>
            <person name="Stocker S."/>
            <person name="Zaccaria P."/>
            <person name="Bevan M."/>
            <person name="Wilson R.K."/>
            <person name="de la Bastide M."/>
            <person name="Habermann K."/>
            <person name="Parnell L."/>
            <person name="Dedhia N."/>
            <person name="Gnoj L."/>
            <person name="Schutz K."/>
            <person name="Huang E."/>
            <person name="Spiegel L."/>
            <person name="Sekhon M."/>
            <person name="Murray J."/>
            <person name="Sheet P."/>
            <person name="Cordes M."/>
            <person name="Abu-Threideh J."/>
            <person name="Stoneking T."/>
            <person name="Kalicki J."/>
            <person name="Graves T."/>
            <person name="Harmon G."/>
            <person name="Edwards J."/>
            <person name="Latreille P."/>
            <person name="Courtney L."/>
            <person name="Cloud J."/>
            <person name="Abbott A."/>
            <person name="Scott K."/>
            <person name="Johnson D."/>
            <person name="Minx P."/>
            <person name="Bentley D."/>
            <person name="Fulton B."/>
            <person name="Miller N."/>
            <person name="Greco T."/>
            <person name="Kemp K."/>
            <person name="Kramer J."/>
            <person name="Fulton L."/>
            <person name="Mardis E."/>
            <person name="Dante M."/>
            <person name="Pepin K."/>
            <person name="Hillier L.W."/>
            <person name="Nelson J."/>
            <person name="Spieth J."/>
            <person name="Ryan E."/>
            <person name="Andrews S."/>
            <person name="Geisel C."/>
            <person name="Layman D."/>
            <person name="Du H."/>
            <person name="Ali J."/>
            <person name="Berghoff A."/>
            <person name="Jones K."/>
            <person name="Drone K."/>
            <person name="Cotton M."/>
            <person name="Joshu C."/>
            <person name="Antonoiu B."/>
            <person name="Zidanic M."/>
            <person name="Strong C."/>
            <person name="Sun H."/>
            <person name="Lamar B."/>
            <person name="Yordan C."/>
            <person name="Ma P."/>
            <person name="Zhong J."/>
            <person name="Preston R."/>
            <person name="Vil D."/>
            <person name="Shekher M."/>
            <person name="Matero A."/>
            <person name="Shah R."/>
            <person name="Swaby I.K."/>
            <person name="O'Shaughnessy A."/>
            <person name="Rodriguez M."/>
            <person name="Hoffman J."/>
            <person name="Till S."/>
            <person name="Granat S."/>
            <person name="Shohdy N."/>
            <person name="Hasegawa A."/>
            <person name="Hameed A."/>
            <person name="Lodhi M."/>
            <person name="Johnson A."/>
            <person name="Chen E."/>
            <person name="Marra M.A."/>
            <person name="Martienssen R."/>
            <person name="McCombie W.R."/>
        </authorList>
    </citation>
    <scope>NUCLEOTIDE SEQUENCE [LARGE SCALE GENOMIC DNA]</scope>
    <source>
        <strain>cv. Columbia</strain>
    </source>
</reference>
<reference key="2">
    <citation type="journal article" date="2017" name="Plant J.">
        <title>Araport11: a complete reannotation of the Arabidopsis thaliana reference genome.</title>
        <authorList>
            <person name="Cheng C.Y."/>
            <person name="Krishnakumar V."/>
            <person name="Chan A.P."/>
            <person name="Thibaud-Nissen F."/>
            <person name="Schobel S."/>
            <person name="Town C.D."/>
        </authorList>
    </citation>
    <scope>GENOME REANNOTATION</scope>
    <source>
        <strain>cv. Columbia</strain>
    </source>
</reference>
<reference key="3">
    <citation type="submission" date="2005-05" db="EMBL/GenBank/DDBJ databases">
        <authorList>
            <person name="Underwood B.A."/>
            <person name="Xiao Y.-L."/>
            <person name="Moskal W.A. Jr."/>
            <person name="Monaghan E.L."/>
            <person name="Wang W."/>
            <person name="Redman J.C."/>
            <person name="Wu H.C."/>
            <person name="Utterback T."/>
            <person name="Town C.D."/>
        </authorList>
    </citation>
    <scope>NUCLEOTIDE SEQUENCE [LARGE SCALE MRNA]</scope>
    <source>
        <strain>cv. Columbia</strain>
    </source>
</reference>
<reference key="4">
    <citation type="journal article" date="2002" name="Plant Cell Physiol.">
        <title>The XTH family of enzymes involved in xyloglucan endotransglucosylation and endohydrolysis: current perspectives and a new unifying nomenclature.</title>
        <authorList>
            <person name="Rose J.K.C."/>
            <person name="Braam J."/>
            <person name="Fry S.C."/>
            <person name="Nishitani K."/>
        </authorList>
    </citation>
    <scope>NOMENCLATURE</scope>
</reference>
<dbReference type="EC" id="2.4.1.207"/>
<dbReference type="EMBL" id="AL079349">
    <property type="protein sequence ID" value="CAB45508.1"/>
    <property type="molecule type" value="Genomic_DNA"/>
</dbReference>
<dbReference type="EMBL" id="AL161535">
    <property type="protein sequence ID" value="CAB78351.1"/>
    <property type="molecule type" value="Genomic_DNA"/>
</dbReference>
<dbReference type="EMBL" id="CP002687">
    <property type="protein sequence ID" value="AEE83229.1"/>
    <property type="molecule type" value="Genomic_DNA"/>
</dbReference>
<dbReference type="EMBL" id="DQ056649">
    <property type="protein sequence ID" value="AAY78796.1"/>
    <property type="molecule type" value="mRNA"/>
</dbReference>
<dbReference type="PIR" id="T10211">
    <property type="entry name" value="T10211"/>
</dbReference>
<dbReference type="RefSeq" id="NP_193045.1">
    <property type="nucleotide sequence ID" value="NM_117378.2"/>
</dbReference>
<dbReference type="SMR" id="Q9SV60"/>
<dbReference type="FunCoup" id="Q9SV60">
    <property type="interactions" value="45"/>
</dbReference>
<dbReference type="STRING" id="3702.Q9SV60"/>
<dbReference type="CAZy" id="GH16">
    <property type="family name" value="Glycoside Hydrolase Family 16"/>
</dbReference>
<dbReference type="PaxDb" id="3702-AT4G13090.1"/>
<dbReference type="ProteomicsDB" id="242426"/>
<dbReference type="EnsemblPlants" id="AT4G13090.1">
    <property type="protein sequence ID" value="AT4G13090.1"/>
    <property type="gene ID" value="AT4G13090"/>
</dbReference>
<dbReference type="GeneID" id="826923"/>
<dbReference type="Gramene" id="AT4G13090.1">
    <property type="protein sequence ID" value="AT4G13090.1"/>
    <property type="gene ID" value="AT4G13090"/>
</dbReference>
<dbReference type="KEGG" id="ath:AT4G13090"/>
<dbReference type="Araport" id="AT4G13090"/>
<dbReference type="TAIR" id="AT4G13090">
    <property type="gene designation" value="XTH2"/>
</dbReference>
<dbReference type="eggNOG" id="KOG0017">
    <property type="taxonomic scope" value="Eukaryota"/>
</dbReference>
<dbReference type="HOGENOM" id="CLU_048041_0_0_1"/>
<dbReference type="InParanoid" id="Q9SV60"/>
<dbReference type="OMA" id="FDQNYEV"/>
<dbReference type="PhylomeDB" id="Q9SV60"/>
<dbReference type="BioCyc" id="ARA:AT4G13090-MONOMER"/>
<dbReference type="PRO" id="PR:Q9SV60"/>
<dbReference type="Proteomes" id="UP000006548">
    <property type="component" value="Chromosome 4"/>
</dbReference>
<dbReference type="ExpressionAtlas" id="Q9SV60">
    <property type="expression patterns" value="baseline and differential"/>
</dbReference>
<dbReference type="GO" id="GO:0048046">
    <property type="term" value="C:apoplast"/>
    <property type="evidence" value="ECO:0007669"/>
    <property type="project" value="UniProtKB-SubCell"/>
</dbReference>
<dbReference type="GO" id="GO:0004553">
    <property type="term" value="F:hydrolase activity, hydrolyzing O-glycosyl compounds"/>
    <property type="evidence" value="ECO:0007669"/>
    <property type="project" value="InterPro"/>
</dbReference>
<dbReference type="GO" id="GO:0030247">
    <property type="term" value="F:polysaccharide binding"/>
    <property type="evidence" value="ECO:0000250"/>
    <property type="project" value="UniProtKB"/>
</dbReference>
<dbReference type="GO" id="GO:0016762">
    <property type="term" value="F:xyloglucan:xyloglucosyl transferase activity"/>
    <property type="evidence" value="ECO:0007669"/>
    <property type="project" value="UniProtKB-EC"/>
</dbReference>
<dbReference type="GO" id="GO:0042546">
    <property type="term" value="P:cell wall biogenesis"/>
    <property type="evidence" value="ECO:0007669"/>
    <property type="project" value="InterPro"/>
</dbReference>
<dbReference type="GO" id="GO:0071555">
    <property type="term" value="P:cell wall organization"/>
    <property type="evidence" value="ECO:0007669"/>
    <property type="project" value="UniProtKB-KW"/>
</dbReference>
<dbReference type="GO" id="GO:0010411">
    <property type="term" value="P:xyloglucan metabolic process"/>
    <property type="evidence" value="ECO:0007669"/>
    <property type="project" value="InterPro"/>
</dbReference>
<dbReference type="CDD" id="cd02176">
    <property type="entry name" value="GH16_XET"/>
    <property type="match status" value="1"/>
</dbReference>
<dbReference type="FunFam" id="2.60.120.200:FF:000025">
    <property type="entry name" value="Xyloglucan endotransglucosylase/hydrolase"/>
    <property type="match status" value="1"/>
</dbReference>
<dbReference type="Gene3D" id="2.60.120.200">
    <property type="match status" value="1"/>
</dbReference>
<dbReference type="InterPro" id="IPR044791">
    <property type="entry name" value="Beta-glucanase/XTH"/>
</dbReference>
<dbReference type="InterPro" id="IPR008264">
    <property type="entry name" value="Beta_glucanase"/>
</dbReference>
<dbReference type="InterPro" id="IPR013320">
    <property type="entry name" value="ConA-like_dom_sf"/>
</dbReference>
<dbReference type="InterPro" id="IPR000757">
    <property type="entry name" value="GH16"/>
</dbReference>
<dbReference type="InterPro" id="IPR010713">
    <property type="entry name" value="XET_C"/>
</dbReference>
<dbReference type="InterPro" id="IPR016455">
    <property type="entry name" value="XTH"/>
</dbReference>
<dbReference type="PANTHER" id="PTHR31062">
    <property type="entry name" value="XYLOGLUCAN ENDOTRANSGLUCOSYLASE/HYDROLASE PROTEIN 8-RELATED"/>
    <property type="match status" value="1"/>
</dbReference>
<dbReference type="Pfam" id="PF00722">
    <property type="entry name" value="Glyco_hydro_16"/>
    <property type="match status" value="1"/>
</dbReference>
<dbReference type="Pfam" id="PF06955">
    <property type="entry name" value="XET_C"/>
    <property type="match status" value="1"/>
</dbReference>
<dbReference type="PIRSF" id="PIRSF005604">
    <property type="entry name" value="XET"/>
    <property type="match status" value="1"/>
</dbReference>
<dbReference type="PRINTS" id="PR00737">
    <property type="entry name" value="GLHYDRLASE16"/>
</dbReference>
<dbReference type="SUPFAM" id="SSF49899">
    <property type="entry name" value="Concanavalin A-like lectins/glucanases"/>
    <property type="match status" value="1"/>
</dbReference>
<dbReference type="PROSITE" id="PS51762">
    <property type="entry name" value="GH16_2"/>
    <property type="match status" value="1"/>
</dbReference>
<proteinExistence type="evidence at transcript level"/>
<protein>
    <recommendedName>
        <fullName>Xyloglucan endotransglucosylase/hydrolase protein 2</fullName>
        <shortName>At-XTH2</shortName>
        <shortName>XTH-2</shortName>
        <ecNumber>2.4.1.207</ecNumber>
    </recommendedName>
</protein>
<evidence type="ECO:0000250" key="1"/>
<evidence type="ECO:0000250" key="2">
    <source>
        <dbReference type="UniProtKB" id="Q8GZD5"/>
    </source>
</evidence>
<evidence type="ECO:0000255" key="3"/>
<evidence type="ECO:0000255" key="4">
    <source>
        <dbReference type="PROSITE-ProRule" id="PRU01098"/>
    </source>
</evidence>
<evidence type="ECO:0000305" key="5"/>
<name>XTH2_ARATH</name>
<keyword id="KW-0052">Apoplast</keyword>
<keyword id="KW-0134">Cell wall</keyword>
<keyword id="KW-0961">Cell wall biogenesis/degradation</keyword>
<keyword id="KW-1015">Disulfide bond</keyword>
<keyword id="KW-0326">Glycosidase</keyword>
<keyword id="KW-0378">Hydrolase</keyword>
<keyword id="KW-1185">Reference proteome</keyword>
<keyword id="KW-0964">Secreted</keyword>
<keyword id="KW-0732">Signal</keyword>
<keyword id="KW-0808">Transferase</keyword>
<gene>
    <name type="primary">XTH2</name>
    <name type="ordered locus">At4g13090</name>
    <name type="ORF">F25G13.180</name>
</gene>
<feature type="signal peptide" evidence="3">
    <location>
        <begin position="1"/>
        <end position="24"/>
    </location>
</feature>
<feature type="chain" id="PRO_0000011802" description="Xyloglucan endotransglucosylase/hydrolase protein 2">
    <location>
        <begin position="25"/>
        <end position="292"/>
    </location>
</feature>
<feature type="domain" description="GH16" evidence="4">
    <location>
        <begin position="25"/>
        <end position="219"/>
    </location>
</feature>
<feature type="active site" description="Nucleophile" evidence="2">
    <location>
        <position position="106"/>
    </location>
</feature>
<feature type="active site" description="Proton donor" evidence="2">
    <location>
        <position position="110"/>
    </location>
</feature>
<feature type="binding site" evidence="2">
    <location>
        <position position="110"/>
    </location>
    <ligand>
        <name>xyloglucan</name>
        <dbReference type="ChEBI" id="CHEBI:18233"/>
    </ligand>
</feature>
<feature type="binding site" evidence="2">
    <location>
        <begin position="123"/>
        <end position="125"/>
    </location>
    <ligand>
        <name>xyloglucan</name>
        <dbReference type="ChEBI" id="CHEBI:18233"/>
    </ligand>
</feature>
<feature type="binding site" evidence="2">
    <location>
        <begin position="133"/>
        <end position="135"/>
    </location>
    <ligand>
        <name>xyloglucan</name>
        <dbReference type="ChEBI" id="CHEBI:18233"/>
    </ligand>
</feature>
<feature type="binding site" evidence="2">
    <location>
        <begin position="198"/>
        <end position="199"/>
    </location>
    <ligand>
        <name>xyloglucan</name>
        <dbReference type="ChEBI" id="CHEBI:18233"/>
    </ligand>
</feature>
<feature type="binding site" evidence="2">
    <location>
        <position position="203"/>
    </location>
    <ligand>
        <name>xyloglucan</name>
        <dbReference type="ChEBI" id="CHEBI:18233"/>
    </ligand>
</feature>
<feature type="binding site" evidence="2">
    <location>
        <position position="280"/>
    </location>
    <ligand>
        <name>xyloglucan</name>
        <dbReference type="ChEBI" id="CHEBI:18233"/>
    </ligand>
</feature>
<feature type="site" description="Important for catalytic activity" evidence="2">
    <location>
        <position position="108"/>
    </location>
</feature>
<feature type="disulfide bond" evidence="2">
    <location>
        <begin position="227"/>
        <end position="239"/>
    </location>
</feature>
<feature type="disulfide bond" evidence="2">
    <location>
        <begin position="275"/>
        <end position="288"/>
    </location>
</feature>
<organism>
    <name type="scientific">Arabidopsis thaliana</name>
    <name type="common">Mouse-ear cress</name>
    <dbReference type="NCBI Taxonomy" id="3702"/>
    <lineage>
        <taxon>Eukaryota</taxon>
        <taxon>Viridiplantae</taxon>
        <taxon>Streptophyta</taxon>
        <taxon>Embryophyta</taxon>
        <taxon>Tracheophyta</taxon>
        <taxon>Spermatophyta</taxon>
        <taxon>Magnoliopsida</taxon>
        <taxon>eudicotyledons</taxon>
        <taxon>Gunneridae</taxon>
        <taxon>Pentapetalae</taxon>
        <taxon>rosids</taxon>
        <taxon>malvids</taxon>
        <taxon>Brassicales</taxon>
        <taxon>Brassicaceae</taxon>
        <taxon>Camelineae</taxon>
        <taxon>Arabidopsis</taxon>
    </lineage>
</organism>
<sequence length="292" mass="33525">MNRIRYCFELVSVLFLMFTANARARGRGAIDFDVNYVVTWGQDHILKLNQGKEVQLSMDYSSGSGFESKSHYGSGFFQMRIKLPPRDSAGVVTAFYLTSKGDTHDEVDFEFLGNRQGKPIAIQTNVFSNGQGGREQKFVPWFDPTTSFHTYGILWNPYQIVFYVDKVPIRVFKNIKKSGVNYPSKPMQLVASLWNGENWATSGGKEKINWAYAPFKAQYQGFSDHGCHVNGQSNNANVCGSTRYWWNTRTYSQLSANEQKVMENVRAKYMTYDYCSDRPRYPVPPSECRWNQ</sequence>